<evidence type="ECO:0000250" key="1"/>
<evidence type="ECO:0000255" key="2">
    <source>
        <dbReference type="PROSITE-ProRule" id="PRU10001"/>
    </source>
</evidence>
<evidence type="ECO:0000305" key="3"/>
<dbReference type="EC" id="1.1.1.1"/>
<dbReference type="EMBL" id="M60790">
    <property type="protein sequence ID" value="AAA72979.1"/>
    <property type="molecule type" value="Genomic_DNA"/>
</dbReference>
<dbReference type="SMR" id="Q00670"/>
<dbReference type="GO" id="GO:0005737">
    <property type="term" value="C:cytoplasm"/>
    <property type="evidence" value="ECO:0007669"/>
    <property type="project" value="TreeGrafter"/>
</dbReference>
<dbReference type="GO" id="GO:0004022">
    <property type="term" value="F:alcohol dehydrogenase (NAD+) activity"/>
    <property type="evidence" value="ECO:0000250"/>
    <property type="project" value="UniProtKB"/>
</dbReference>
<dbReference type="GO" id="GO:0006066">
    <property type="term" value="P:alcohol metabolic process"/>
    <property type="evidence" value="ECO:0007669"/>
    <property type="project" value="InterPro"/>
</dbReference>
<dbReference type="CDD" id="cd05323">
    <property type="entry name" value="ADH_SDR_c_like"/>
    <property type="match status" value="1"/>
</dbReference>
<dbReference type="Gene3D" id="3.40.50.720">
    <property type="entry name" value="NAD(P)-binding Rossmann-like Domain"/>
    <property type="match status" value="1"/>
</dbReference>
<dbReference type="InterPro" id="IPR002425">
    <property type="entry name" value="ADH_Drosophila-type"/>
</dbReference>
<dbReference type="InterPro" id="IPR036291">
    <property type="entry name" value="NAD(P)-bd_dom_sf"/>
</dbReference>
<dbReference type="InterPro" id="IPR020904">
    <property type="entry name" value="Sc_DH/Rdtase_CS"/>
</dbReference>
<dbReference type="InterPro" id="IPR002347">
    <property type="entry name" value="SDR_fam"/>
</dbReference>
<dbReference type="PANTHER" id="PTHR44229">
    <property type="entry name" value="15-HYDROXYPROSTAGLANDIN DEHYDROGENASE [NAD(+)]"/>
    <property type="match status" value="1"/>
</dbReference>
<dbReference type="PANTHER" id="PTHR44229:SF8">
    <property type="entry name" value="ALCOHOL DEHYDROGENASE-RELATED"/>
    <property type="match status" value="1"/>
</dbReference>
<dbReference type="Pfam" id="PF00106">
    <property type="entry name" value="adh_short"/>
    <property type="match status" value="1"/>
</dbReference>
<dbReference type="PRINTS" id="PR01168">
    <property type="entry name" value="ALCDHDRGNASE"/>
</dbReference>
<dbReference type="PRINTS" id="PR01167">
    <property type="entry name" value="INSADHFAMILY"/>
</dbReference>
<dbReference type="PRINTS" id="PR00080">
    <property type="entry name" value="SDRFAMILY"/>
</dbReference>
<dbReference type="SUPFAM" id="SSF51735">
    <property type="entry name" value="NAD(P)-binding Rossmann-fold domains"/>
    <property type="match status" value="1"/>
</dbReference>
<dbReference type="PROSITE" id="PS00061">
    <property type="entry name" value="ADH_SHORT"/>
    <property type="match status" value="1"/>
</dbReference>
<reference key="1">
    <citation type="journal article" date="1991" name="Mol. Biol. Evol.">
        <title>The molecular evolution of the alcohol dehydrogenase locus and the phylogeny of Hawaiian Drosophila.</title>
        <authorList>
            <person name="Thomas R.H."/>
            <person name="Hunt J.A."/>
        </authorList>
    </citation>
    <scope>NUCLEOTIDE SEQUENCE [GENOMIC DNA]</scope>
</reference>
<accession>Q00670</accession>
<organism>
    <name type="scientific">Scaptomyza crassifemur</name>
    <name type="common">Fruit fly</name>
    <name type="synonym">Drosophila crassifemur</name>
    <dbReference type="NCBI Taxonomy" id="13053"/>
    <lineage>
        <taxon>Eukaryota</taxon>
        <taxon>Metazoa</taxon>
        <taxon>Ecdysozoa</taxon>
        <taxon>Arthropoda</taxon>
        <taxon>Hexapoda</taxon>
        <taxon>Insecta</taxon>
        <taxon>Pterygota</taxon>
        <taxon>Neoptera</taxon>
        <taxon>Endopterygota</taxon>
        <taxon>Diptera</taxon>
        <taxon>Brachycera</taxon>
        <taxon>Muscomorpha</taxon>
        <taxon>Ephydroidea</taxon>
        <taxon>Drosophilidae</taxon>
        <taxon>Scaptomyza</taxon>
    </lineage>
</organism>
<feature type="chain" id="PRO_0000054457" description="Alcohol dehydrogenase">
    <location>
        <begin position="1"/>
        <end position="254"/>
    </location>
</feature>
<feature type="active site" description="Proton acceptor" evidence="2">
    <location>
        <position position="151"/>
    </location>
</feature>
<feature type="binding site" evidence="1">
    <location>
        <begin position="10"/>
        <end position="33"/>
    </location>
    <ligand>
        <name>NAD(+)</name>
        <dbReference type="ChEBI" id="CHEBI:57540"/>
    </ligand>
</feature>
<feature type="binding site" evidence="1">
    <location>
        <position position="138"/>
    </location>
    <ligand>
        <name>substrate</name>
    </ligand>
</feature>
<gene>
    <name type="primary">Adh</name>
</gene>
<proteinExistence type="inferred from homology"/>
<name>ADH_SCACA</name>
<comment type="catalytic activity">
    <reaction evidence="2">
        <text>a primary alcohol + NAD(+) = an aldehyde + NADH + H(+)</text>
        <dbReference type="Rhea" id="RHEA:10736"/>
        <dbReference type="ChEBI" id="CHEBI:15378"/>
        <dbReference type="ChEBI" id="CHEBI:15734"/>
        <dbReference type="ChEBI" id="CHEBI:17478"/>
        <dbReference type="ChEBI" id="CHEBI:57540"/>
        <dbReference type="ChEBI" id="CHEBI:57945"/>
        <dbReference type="EC" id="1.1.1.1"/>
    </reaction>
</comment>
<comment type="catalytic activity">
    <reaction evidence="2">
        <text>a secondary alcohol + NAD(+) = a ketone + NADH + H(+)</text>
        <dbReference type="Rhea" id="RHEA:10740"/>
        <dbReference type="ChEBI" id="CHEBI:15378"/>
        <dbReference type="ChEBI" id="CHEBI:17087"/>
        <dbReference type="ChEBI" id="CHEBI:35681"/>
        <dbReference type="ChEBI" id="CHEBI:57540"/>
        <dbReference type="ChEBI" id="CHEBI:57945"/>
        <dbReference type="EC" id="1.1.1.1"/>
    </reaction>
</comment>
<comment type="subunit">
    <text>Homodimer.</text>
</comment>
<comment type="similarity">
    <text evidence="3">Belongs to the short-chain dehydrogenases/reductases (SDR) family.</text>
</comment>
<sequence length="254" mass="27406">MFIAGKNIIFVAGLGGIGLETSREIVKSGPKNLVILDRAPNPAAIAELQALNPKVTVSFYLYDVTVPQSETVKLLKTIFAKLKTIDLLINGAGILDDHQIERTIAVNFTGTVNTTTAIMEFWDKRKGGPGGVVANICSVTGFNSIYQVPVYSASKAAALSFTSSIAKLATITGVTVYSINPGITDTTLVHKFNSWLDVEPHVAEKLLAFPTQTSLACAKNFVKAIEANKNGAIWKLDLGRLDEIEWTKHWDSGI</sequence>
<protein>
    <recommendedName>
        <fullName>Alcohol dehydrogenase</fullName>
        <ecNumber>1.1.1.1</ecNumber>
    </recommendedName>
</protein>
<keyword id="KW-0520">NAD</keyword>
<keyword id="KW-0560">Oxidoreductase</keyword>